<reference key="1">
    <citation type="journal article" date="1998" name="Science">
        <title>Genome sequence of the nematode C. elegans: a platform for investigating biology.</title>
        <authorList>
            <consortium name="The C. elegans sequencing consortium"/>
        </authorList>
    </citation>
    <scope>NUCLEOTIDE SEQUENCE [LARGE SCALE GENOMIC DNA]</scope>
    <source>
        <strain>Bristol N2</strain>
    </source>
</reference>
<proteinExistence type="inferred from homology"/>
<name>ERF1_CAEEL</name>
<protein>
    <recommendedName>
        <fullName evidence="1">Eukaryotic peptide chain release factor subunit 1</fullName>
        <shortName evidence="1">Eukaryotic release factor 1</shortName>
        <shortName evidence="1">eRF1</shortName>
    </recommendedName>
</protein>
<feature type="chain" id="PRO_0000143148" description="Eukaryotic peptide chain release factor subunit 1" evidence="2">
    <location>
        <begin position="1"/>
        <end position="593"/>
    </location>
</feature>
<feature type="splice variant" id="VSP_059940" description="In isoform b." evidence="2">
    <location>
        <begin position="444"/>
        <end position="593"/>
    </location>
</feature>
<organism>
    <name type="scientific">Caenorhabditis elegans</name>
    <dbReference type="NCBI Taxonomy" id="6239"/>
    <lineage>
        <taxon>Eukaryota</taxon>
        <taxon>Metazoa</taxon>
        <taxon>Ecdysozoa</taxon>
        <taxon>Nematoda</taxon>
        <taxon>Chromadorea</taxon>
        <taxon>Rhabditida</taxon>
        <taxon>Rhabditina</taxon>
        <taxon>Rhabditomorpha</taxon>
        <taxon>Rhabditoidea</taxon>
        <taxon>Rhabditidae</taxon>
        <taxon>Peloderinae</taxon>
        <taxon>Caenorhabditis</taxon>
    </lineage>
</organism>
<keyword id="KW-0025">Alternative splicing</keyword>
<keyword id="KW-0963">Cytoplasm</keyword>
<keyword id="KW-0648">Protein biosynthesis</keyword>
<keyword id="KW-1185">Reference proteome</keyword>
<dbReference type="EMBL" id="BX284605">
    <property type="protein sequence ID" value="CCD72044.1"/>
    <property type="molecule type" value="Genomic_DNA"/>
</dbReference>
<dbReference type="EMBL" id="BX284605">
    <property type="protein sequence ID" value="CDG24149.1"/>
    <property type="molecule type" value="Genomic_DNA"/>
</dbReference>
<dbReference type="PIR" id="T31907">
    <property type="entry name" value="T31907"/>
</dbReference>
<dbReference type="RefSeq" id="NP_001294675.1">
    <property type="nucleotide sequence ID" value="NM_001307746.1"/>
</dbReference>
<dbReference type="RefSeq" id="NP_001343671.1">
    <molecule id="O16520-1"/>
    <property type="nucleotide sequence ID" value="NM_001356664.2"/>
</dbReference>
<dbReference type="RefSeq" id="NP_001380133.1">
    <molecule id="O16520-2"/>
    <property type="nucleotide sequence ID" value="NM_001392531.1"/>
</dbReference>
<dbReference type="SMR" id="O16520"/>
<dbReference type="BioGRID" id="44074">
    <property type="interactions" value="14"/>
</dbReference>
<dbReference type="FunCoup" id="O16520">
    <property type="interactions" value="3588"/>
</dbReference>
<dbReference type="IntAct" id="O16520">
    <property type="interactions" value="1"/>
</dbReference>
<dbReference type="STRING" id="6239.T05H4.6a.1"/>
<dbReference type="PaxDb" id="6239-T05H4.6a"/>
<dbReference type="PeptideAtlas" id="O16520"/>
<dbReference type="EnsemblMetazoa" id="T05H4.6a.1">
    <molecule id="O16520-1"/>
    <property type="protein sequence ID" value="T05H4.6a.1"/>
    <property type="gene ID" value="WBGene00020269"/>
</dbReference>
<dbReference type="EnsemblMetazoa" id="T05H4.6b.1">
    <molecule id="O16520-2"/>
    <property type="protein sequence ID" value="T05H4.6b.1"/>
    <property type="gene ID" value="WBGene00020269"/>
</dbReference>
<dbReference type="EnsemblMetazoa" id="T05H4.6b.2">
    <molecule id="O16520-2"/>
    <property type="protein sequence ID" value="T05H4.6b.2"/>
    <property type="gene ID" value="WBGene00020269"/>
</dbReference>
<dbReference type="GeneID" id="179028"/>
<dbReference type="AGR" id="WB:WBGene00020269"/>
<dbReference type="WormBase" id="T05H4.6a">
    <molecule id="O16520-1"/>
    <property type="protein sequence ID" value="CE52351"/>
    <property type="gene ID" value="WBGene00020269"/>
    <property type="gene designation" value="erfa-1"/>
</dbReference>
<dbReference type="WormBase" id="T05H4.6b">
    <molecule id="O16520-2"/>
    <property type="protein sequence ID" value="CE13279"/>
    <property type="gene ID" value="WBGene00020269"/>
    <property type="gene designation" value="erfa-1"/>
</dbReference>
<dbReference type="eggNOG" id="KOG0688">
    <property type="taxonomic scope" value="Eukaryota"/>
</dbReference>
<dbReference type="GeneTree" id="ENSGT00390000009004"/>
<dbReference type="HOGENOM" id="CLU_035759_0_0_1"/>
<dbReference type="InParanoid" id="O16520"/>
<dbReference type="OrthoDB" id="10254527at2759"/>
<dbReference type="PhylomeDB" id="O16520"/>
<dbReference type="Reactome" id="R-CEL-72764">
    <property type="pathway name" value="Eukaryotic Translation Termination"/>
</dbReference>
<dbReference type="Reactome" id="R-CEL-9629569">
    <property type="pathway name" value="Protein hydroxylation"/>
</dbReference>
<dbReference type="Reactome" id="R-CEL-975956">
    <property type="pathway name" value="Nonsense Mediated Decay (NMD) independent of the Exon Junction Complex (EJC)"/>
</dbReference>
<dbReference type="Reactome" id="R-CEL-975957">
    <property type="pathway name" value="Nonsense Mediated Decay (NMD) enhanced by the Exon Junction Complex (EJC)"/>
</dbReference>
<dbReference type="PRO" id="PR:O16520"/>
<dbReference type="Proteomes" id="UP000001940">
    <property type="component" value="Chromosome V"/>
</dbReference>
<dbReference type="Bgee" id="WBGene00020269">
    <property type="expression patterns" value="Expressed in germ line (C elegans) and 4 other cell types or tissues"/>
</dbReference>
<dbReference type="GO" id="GO:0005829">
    <property type="term" value="C:cytosol"/>
    <property type="evidence" value="ECO:0000318"/>
    <property type="project" value="GO_Central"/>
</dbReference>
<dbReference type="GO" id="GO:0018444">
    <property type="term" value="C:translation release factor complex"/>
    <property type="evidence" value="ECO:0000318"/>
    <property type="project" value="GO_Central"/>
</dbReference>
<dbReference type="GO" id="GO:1990825">
    <property type="term" value="F:sequence-specific mRNA binding"/>
    <property type="evidence" value="ECO:0000318"/>
    <property type="project" value="GO_Central"/>
</dbReference>
<dbReference type="GO" id="GO:0016149">
    <property type="term" value="F:translation release factor activity, codon specific"/>
    <property type="evidence" value="ECO:0000318"/>
    <property type="project" value="GO_Central"/>
</dbReference>
<dbReference type="GO" id="GO:0002184">
    <property type="term" value="P:cytoplasmic translational termination"/>
    <property type="evidence" value="ECO:0000318"/>
    <property type="project" value="GO_Central"/>
</dbReference>
<dbReference type="FunFam" id="3.30.1330.30:FF:000009">
    <property type="entry name" value="Eukaryotic peptide chain release factor subunit 1"/>
    <property type="match status" value="1"/>
</dbReference>
<dbReference type="FunFam" id="3.30.420.60:FF:000001">
    <property type="entry name" value="Eukaryotic peptide chain release factor subunit 1"/>
    <property type="match status" value="1"/>
</dbReference>
<dbReference type="FunFam" id="3.30.960.10:FF:000001">
    <property type="entry name" value="Eukaryotic peptide chain release factor subunit 1"/>
    <property type="match status" value="1"/>
</dbReference>
<dbReference type="Gene3D" id="3.30.1330.30">
    <property type="match status" value="1"/>
</dbReference>
<dbReference type="Gene3D" id="3.30.960.10">
    <property type="entry name" value="eRF1 domain 1"/>
    <property type="match status" value="1"/>
</dbReference>
<dbReference type="Gene3D" id="3.30.420.60">
    <property type="entry name" value="eRF1 domain 2"/>
    <property type="match status" value="1"/>
</dbReference>
<dbReference type="InterPro" id="IPR042226">
    <property type="entry name" value="eFR1_2_sf"/>
</dbReference>
<dbReference type="InterPro" id="IPR005140">
    <property type="entry name" value="eRF1_1_Pelota"/>
</dbReference>
<dbReference type="InterPro" id="IPR024049">
    <property type="entry name" value="eRF1_1_sf"/>
</dbReference>
<dbReference type="InterPro" id="IPR005141">
    <property type="entry name" value="eRF1_2"/>
</dbReference>
<dbReference type="InterPro" id="IPR005142">
    <property type="entry name" value="eRF1_3"/>
</dbReference>
<dbReference type="InterPro" id="IPR004403">
    <property type="entry name" value="Peptide_chain-rel_eRF1/aRF1"/>
</dbReference>
<dbReference type="InterPro" id="IPR029064">
    <property type="entry name" value="Ribosomal_eL30-like_sf"/>
</dbReference>
<dbReference type="NCBIfam" id="TIGR03676">
    <property type="entry name" value="aRF1_eRF1"/>
    <property type="match status" value="1"/>
</dbReference>
<dbReference type="PANTHER" id="PTHR10113">
    <property type="entry name" value="PEPTIDE CHAIN RELEASE FACTOR SUBUNIT 1"/>
    <property type="match status" value="1"/>
</dbReference>
<dbReference type="Pfam" id="PF03463">
    <property type="entry name" value="eRF1_1"/>
    <property type="match status" value="1"/>
</dbReference>
<dbReference type="Pfam" id="PF03464">
    <property type="entry name" value="eRF1_2"/>
    <property type="match status" value="1"/>
</dbReference>
<dbReference type="Pfam" id="PF03465">
    <property type="entry name" value="eRF1_3"/>
    <property type="match status" value="1"/>
</dbReference>
<dbReference type="SMART" id="SM01194">
    <property type="entry name" value="eRF1_1"/>
    <property type="match status" value="1"/>
</dbReference>
<dbReference type="SUPFAM" id="SSF55315">
    <property type="entry name" value="L30e-like"/>
    <property type="match status" value="1"/>
</dbReference>
<dbReference type="SUPFAM" id="SSF55481">
    <property type="entry name" value="N-terminal domain of eukaryotic peptide chain release factor subunit 1, ERF1"/>
    <property type="match status" value="1"/>
</dbReference>
<dbReference type="SUPFAM" id="SSF53137">
    <property type="entry name" value="Translational machinery components"/>
    <property type="match status" value="1"/>
</dbReference>
<evidence type="ECO:0000250" key="1">
    <source>
        <dbReference type="UniProtKB" id="P62495"/>
    </source>
</evidence>
<evidence type="ECO:0000305" key="2"/>
<evidence type="ECO:0000312" key="3">
    <source>
        <dbReference type="WormBase" id="T05H4.6a"/>
    </source>
</evidence>
<evidence type="ECO:0000312" key="4">
    <source>
        <dbReference type="WormBase" id="T05H4.6b"/>
    </source>
</evidence>
<sequence length="593" mass="66117">MSAPAAGATAGGDDAADRNVEMWKIKRLIKSLELARGNGTSMISLIIPPKDQVARIQRMLAEEYGTASNIKSRVNRLSVLGAITSVQGRLKLYNKVPPNGLVVYCGTIMTDEGKEKKVNIDFEPFKAINTSLYLCDNKFHTEALQGLLADDNKFGFIIMDGNGCLFGTLQGNTREVLHKFTVDLPKKHGRGGQSAVRFARLRNEKRHNYVRKVAENSVEQFIKNDKVTVAGLILAGSADFKTELGQSDMFDQRLQAKMIKTVDIAYGGENGFNQAIELAADTLASVKFIQEKKLIGGYFDEISQDTGKYVFGVKDTLAALEMGAIETLICWENLDIVRYKMKNSLGEDILLNLRPDEEKDKSHFTDSETGQDMEIIETMPLLEWFANNYKNFGAALEIVTDKSQEGAQFVRGFGGIGGLLRYRVDLAHVDLEDELDNIDLDDYSRAAVVSHWAPYSFLLLFKLVSSFFFINLFINYPALSNYNISLSQSSSSLIAISHTTLYSKFLFHFIEFAPRVPHYCRFVWSVDAFSSAGKASHVCQHTEKETFHARNEDAIGGLFNRTKVEARATHSHSMTSTLSLPSVDVSTRNSNDF</sequence>
<comment type="function">
    <text evidence="1">Directs the termination of nascent peptide synthesis (translation) in response to the termination codons UAA, UAG and UGA.</text>
</comment>
<comment type="subunit">
    <text evidence="1">Heterodimer of two subunits, one of which binds GTP.</text>
</comment>
<comment type="subcellular location">
    <subcellularLocation>
        <location evidence="1">Cytoplasm</location>
    </subcellularLocation>
</comment>
<comment type="alternative products">
    <event type="alternative splicing"/>
    <isoform>
        <id>O16520-1</id>
        <name evidence="3">a</name>
        <sequence type="displayed"/>
    </isoform>
    <isoform>
        <id>O16520-2</id>
        <name evidence="4">b</name>
        <sequence type="described" ref="VSP_059940"/>
    </isoform>
</comment>
<comment type="similarity">
    <text evidence="2">Belongs to the eukaryotic release factor 1 family.</text>
</comment>
<accession>O16520</accession>
<accession>S6EZT6</accession>
<gene>
    <name evidence="3" type="primary">erfa-1</name>
    <name evidence="3" type="synonym">etf-1</name>
    <name evidence="3" type="ORF">T05H4.6</name>
</gene>